<protein>
    <recommendedName>
        <fullName evidence="2">Large ribosomal subunit protein uL30</fullName>
    </recommendedName>
    <alternativeName>
        <fullName>50S ribosomal protein L30</fullName>
    </alternativeName>
</protein>
<feature type="chain" id="PRO_0000224246" description="Large ribosomal subunit protein uL30">
    <location>
        <begin position="1"/>
        <end position="25" status="greater than"/>
    </location>
</feature>
<feature type="non-terminal residue">
    <location>
        <position position="25"/>
    </location>
</feature>
<keyword id="KW-0903">Direct protein sequencing</keyword>
<keyword id="KW-0687">Ribonucleoprotein</keyword>
<keyword id="KW-0689">Ribosomal protein</keyword>
<dbReference type="GO" id="GO:1990904">
    <property type="term" value="C:ribonucleoprotein complex"/>
    <property type="evidence" value="ECO:0007669"/>
    <property type="project" value="UniProtKB-KW"/>
</dbReference>
<dbReference type="GO" id="GO:0005840">
    <property type="term" value="C:ribosome"/>
    <property type="evidence" value="ECO:0007669"/>
    <property type="project" value="UniProtKB-KW"/>
</dbReference>
<name>RL30_PSEFA</name>
<evidence type="ECO:0000250" key="1"/>
<evidence type="ECO:0000305" key="2"/>
<comment type="subunit">
    <text evidence="1">Part of the 50S ribosomal subunit.</text>
</comment>
<comment type="similarity">
    <text evidence="2">Belongs to the universal ribosomal protein uL30 family.</text>
</comment>
<organism>
    <name type="scientific">Pseudomonas fluorescens biotype A</name>
    <dbReference type="NCBI Taxonomy" id="32035"/>
    <lineage>
        <taxon>Bacteria</taxon>
        <taxon>Pseudomonadati</taxon>
        <taxon>Pseudomonadota</taxon>
        <taxon>Gammaproteobacteria</taxon>
        <taxon>Pseudomonadales</taxon>
        <taxon>Pseudomonadaceae</taxon>
        <taxon>Pseudomonas</taxon>
    </lineage>
</organism>
<proteinExistence type="evidence at protein level"/>
<reference key="1">
    <citation type="journal article" date="1995" name="Int. J. Syst. Bacteriol.">
        <title>Comparative ribosomal protein sequence analyses of a phylogenetically defined genus, Pseudomonas, and its relatives.</title>
        <authorList>
            <person name="Ochi K."/>
        </authorList>
    </citation>
    <scope>PROTEIN SEQUENCE</scope>
    <source>
        <strain>ATCC 13525 / DSM 50090 / JCM 5963 / NBRC 14160 / NCIMB 9046 / NCTC 10038 / VKM B-894</strain>
    </source>
</reference>
<gene>
    <name type="primary">rpmD</name>
</gene>
<sequence length="25" mass="2684">ATVKVTLIKSVTGRIPNHKLXVKGL</sequence>
<accession>Q9R4N7</accession>